<comment type="similarity">
    <text evidence="1">Belongs to the UPF0237 family.</text>
</comment>
<dbReference type="EMBL" id="AE017262">
    <property type="protein sequence ID" value="AAT03344.1"/>
    <property type="molecule type" value="Genomic_DNA"/>
</dbReference>
<dbReference type="RefSeq" id="WP_003721327.1">
    <property type="nucleotide sequence ID" value="NC_002973.6"/>
</dbReference>
<dbReference type="SMR" id="Q723B7"/>
<dbReference type="KEGG" id="lmf:LMOf2365_0562"/>
<dbReference type="HOGENOM" id="CLU_155669_2_0_9"/>
<dbReference type="CDD" id="cd04872">
    <property type="entry name" value="ACT_1ZPV"/>
    <property type="match status" value="1"/>
</dbReference>
<dbReference type="FunFam" id="3.30.70.260:FF:000032">
    <property type="entry name" value="UPF0237 protein SP_0238"/>
    <property type="match status" value="1"/>
</dbReference>
<dbReference type="Gene3D" id="3.30.70.260">
    <property type="match status" value="1"/>
</dbReference>
<dbReference type="HAMAP" id="MF_01054">
    <property type="entry name" value="UPF0237"/>
    <property type="match status" value="1"/>
</dbReference>
<dbReference type="InterPro" id="IPR045865">
    <property type="entry name" value="ACT-like_dom_sf"/>
</dbReference>
<dbReference type="InterPro" id="IPR002912">
    <property type="entry name" value="ACT_dom"/>
</dbReference>
<dbReference type="InterPro" id="IPR050990">
    <property type="entry name" value="UPF0237/GcvR_regulator"/>
</dbReference>
<dbReference type="InterPro" id="IPR022986">
    <property type="entry name" value="UPF0237_ACT"/>
</dbReference>
<dbReference type="NCBIfam" id="NF001220">
    <property type="entry name" value="PRK00194.1"/>
    <property type="match status" value="1"/>
</dbReference>
<dbReference type="PANTHER" id="PTHR34875">
    <property type="entry name" value="UPF0237 PROTEIN MJ1558"/>
    <property type="match status" value="1"/>
</dbReference>
<dbReference type="PANTHER" id="PTHR34875:SF6">
    <property type="entry name" value="UPF0237 PROTEIN MJ1558"/>
    <property type="match status" value="1"/>
</dbReference>
<dbReference type="Pfam" id="PF13740">
    <property type="entry name" value="ACT_6"/>
    <property type="match status" value="1"/>
</dbReference>
<dbReference type="SUPFAM" id="SSF55021">
    <property type="entry name" value="ACT-like"/>
    <property type="match status" value="1"/>
</dbReference>
<dbReference type="PROSITE" id="PS51671">
    <property type="entry name" value="ACT"/>
    <property type="match status" value="1"/>
</dbReference>
<organism>
    <name type="scientific">Listeria monocytogenes serotype 4b (strain F2365)</name>
    <dbReference type="NCBI Taxonomy" id="265669"/>
    <lineage>
        <taxon>Bacteria</taxon>
        <taxon>Bacillati</taxon>
        <taxon>Bacillota</taxon>
        <taxon>Bacilli</taxon>
        <taxon>Bacillales</taxon>
        <taxon>Listeriaceae</taxon>
        <taxon>Listeria</taxon>
    </lineage>
</organism>
<name>Y562_LISMF</name>
<gene>
    <name type="ordered locus">LMOf2365_0562</name>
</gene>
<evidence type="ECO:0000255" key="1">
    <source>
        <dbReference type="HAMAP-Rule" id="MF_01054"/>
    </source>
</evidence>
<feature type="chain" id="PRO_0000219902" description="UPF0237 protein LMOf2365_0562">
    <location>
        <begin position="1"/>
        <end position="89"/>
    </location>
</feature>
<feature type="domain" description="ACT" evidence="1">
    <location>
        <begin position="4"/>
        <end position="78"/>
    </location>
</feature>
<accession>Q723B7</accession>
<proteinExistence type="inferred from homology"/>
<reference key="1">
    <citation type="journal article" date="2004" name="Nucleic Acids Res.">
        <title>Whole genome comparisons of serotype 4b and 1/2a strains of the food-borne pathogen Listeria monocytogenes reveal new insights into the core genome components of this species.</title>
        <authorList>
            <person name="Nelson K.E."/>
            <person name="Fouts D.E."/>
            <person name="Mongodin E.F."/>
            <person name="Ravel J."/>
            <person name="DeBoy R.T."/>
            <person name="Kolonay J.F."/>
            <person name="Rasko D.A."/>
            <person name="Angiuoli S.V."/>
            <person name="Gill S.R."/>
            <person name="Paulsen I.T."/>
            <person name="Peterson J.D."/>
            <person name="White O."/>
            <person name="Nelson W.C."/>
            <person name="Nierman W.C."/>
            <person name="Beanan M.J."/>
            <person name="Brinkac L.M."/>
            <person name="Daugherty S.C."/>
            <person name="Dodson R.J."/>
            <person name="Durkin A.S."/>
            <person name="Madupu R."/>
            <person name="Haft D.H."/>
            <person name="Selengut J."/>
            <person name="Van Aken S.E."/>
            <person name="Khouri H.M."/>
            <person name="Fedorova N."/>
            <person name="Forberger H.A."/>
            <person name="Tran B."/>
            <person name="Kathariou S."/>
            <person name="Wonderling L.D."/>
            <person name="Uhlich G.A."/>
            <person name="Bayles D.O."/>
            <person name="Luchansky J.B."/>
            <person name="Fraser C.M."/>
        </authorList>
    </citation>
    <scope>NUCLEOTIDE SEQUENCE [LARGE SCALE GENOMIC DNA]</scope>
    <source>
        <strain>F2365</strain>
    </source>
</reference>
<protein>
    <recommendedName>
        <fullName evidence="1">UPF0237 protein LMOf2365_0562</fullName>
    </recommendedName>
</protein>
<sequence>MRAVLTVIGKDNVGIVAGVSNKLAELNINIVDVSQTIMDGYFTMMMMCDISQITKEFDEVKAELAGKGEDLQVKIHIQREEIFNAMHKL</sequence>